<accession>Q837R9</accession>
<gene>
    <name evidence="1" type="primary">uvrB</name>
    <name type="ordered locus">EF_0762</name>
</gene>
<proteinExistence type="inferred from homology"/>
<dbReference type="EMBL" id="AE016830">
    <property type="protein sequence ID" value="AAO80579.1"/>
    <property type="molecule type" value="Genomic_DNA"/>
</dbReference>
<dbReference type="RefSeq" id="NP_814509.1">
    <property type="nucleotide sequence ID" value="NC_004668.1"/>
</dbReference>
<dbReference type="RefSeq" id="WP_002379127.1">
    <property type="nucleotide sequence ID" value="NZ_KE136527.1"/>
</dbReference>
<dbReference type="SMR" id="Q837R9"/>
<dbReference type="STRING" id="226185.EF_0762"/>
<dbReference type="EnsemblBacteria" id="AAO80579">
    <property type="protein sequence ID" value="AAO80579"/>
    <property type="gene ID" value="EF_0762"/>
</dbReference>
<dbReference type="GeneID" id="60893055"/>
<dbReference type="KEGG" id="efa:EF0762"/>
<dbReference type="PATRIC" id="fig|226185.45.peg.2702"/>
<dbReference type="eggNOG" id="COG0556">
    <property type="taxonomic scope" value="Bacteria"/>
</dbReference>
<dbReference type="HOGENOM" id="CLU_009621_2_1_9"/>
<dbReference type="Proteomes" id="UP000001415">
    <property type="component" value="Chromosome"/>
</dbReference>
<dbReference type="GO" id="GO:0005737">
    <property type="term" value="C:cytoplasm"/>
    <property type="evidence" value="ECO:0007669"/>
    <property type="project" value="UniProtKB-SubCell"/>
</dbReference>
<dbReference type="GO" id="GO:0009380">
    <property type="term" value="C:excinuclease repair complex"/>
    <property type="evidence" value="ECO:0007669"/>
    <property type="project" value="InterPro"/>
</dbReference>
<dbReference type="GO" id="GO:0005524">
    <property type="term" value="F:ATP binding"/>
    <property type="evidence" value="ECO:0007669"/>
    <property type="project" value="UniProtKB-UniRule"/>
</dbReference>
<dbReference type="GO" id="GO:0016887">
    <property type="term" value="F:ATP hydrolysis activity"/>
    <property type="evidence" value="ECO:0007669"/>
    <property type="project" value="InterPro"/>
</dbReference>
<dbReference type="GO" id="GO:0003677">
    <property type="term" value="F:DNA binding"/>
    <property type="evidence" value="ECO:0007669"/>
    <property type="project" value="UniProtKB-UniRule"/>
</dbReference>
<dbReference type="GO" id="GO:0009381">
    <property type="term" value="F:excinuclease ABC activity"/>
    <property type="evidence" value="ECO:0007669"/>
    <property type="project" value="UniProtKB-UniRule"/>
</dbReference>
<dbReference type="GO" id="GO:0006289">
    <property type="term" value="P:nucleotide-excision repair"/>
    <property type="evidence" value="ECO:0007669"/>
    <property type="project" value="UniProtKB-UniRule"/>
</dbReference>
<dbReference type="GO" id="GO:0009432">
    <property type="term" value="P:SOS response"/>
    <property type="evidence" value="ECO:0007669"/>
    <property type="project" value="UniProtKB-UniRule"/>
</dbReference>
<dbReference type="CDD" id="cd17916">
    <property type="entry name" value="DEXHc_UvrB"/>
    <property type="match status" value="1"/>
</dbReference>
<dbReference type="CDD" id="cd18790">
    <property type="entry name" value="SF2_C_UvrB"/>
    <property type="match status" value="1"/>
</dbReference>
<dbReference type="FunFam" id="3.40.50.300:FF:000477">
    <property type="entry name" value="UvrABC system protein B"/>
    <property type="match status" value="1"/>
</dbReference>
<dbReference type="Gene3D" id="3.40.50.300">
    <property type="entry name" value="P-loop containing nucleotide triphosphate hydrolases"/>
    <property type="match status" value="3"/>
</dbReference>
<dbReference type="Gene3D" id="4.10.860.10">
    <property type="entry name" value="UVR domain"/>
    <property type="match status" value="1"/>
</dbReference>
<dbReference type="HAMAP" id="MF_00204">
    <property type="entry name" value="UvrB"/>
    <property type="match status" value="1"/>
</dbReference>
<dbReference type="InterPro" id="IPR006935">
    <property type="entry name" value="Helicase/UvrB_N"/>
</dbReference>
<dbReference type="InterPro" id="IPR014001">
    <property type="entry name" value="Helicase_ATP-bd"/>
</dbReference>
<dbReference type="InterPro" id="IPR001650">
    <property type="entry name" value="Helicase_C-like"/>
</dbReference>
<dbReference type="InterPro" id="IPR027417">
    <property type="entry name" value="P-loop_NTPase"/>
</dbReference>
<dbReference type="InterPro" id="IPR001943">
    <property type="entry name" value="UVR_dom"/>
</dbReference>
<dbReference type="InterPro" id="IPR036876">
    <property type="entry name" value="UVR_dom_sf"/>
</dbReference>
<dbReference type="InterPro" id="IPR004807">
    <property type="entry name" value="UvrB"/>
</dbReference>
<dbReference type="InterPro" id="IPR041471">
    <property type="entry name" value="UvrB_inter"/>
</dbReference>
<dbReference type="InterPro" id="IPR024759">
    <property type="entry name" value="UvrB_YAD/RRR_dom"/>
</dbReference>
<dbReference type="NCBIfam" id="NF003673">
    <property type="entry name" value="PRK05298.1"/>
    <property type="match status" value="1"/>
</dbReference>
<dbReference type="NCBIfam" id="TIGR00631">
    <property type="entry name" value="uvrb"/>
    <property type="match status" value="1"/>
</dbReference>
<dbReference type="PANTHER" id="PTHR24029">
    <property type="entry name" value="UVRABC SYSTEM PROTEIN B"/>
    <property type="match status" value="1"/>
</dbReference>
<dbReference type="PANTHER" id="PTHR24029:SF0">
    <property type="entry name" value="UVRABC SYSTEM PROTEIN B"/>
    <property type="match status" value="1"/>
</dbReference>
<dbReference type="Pfam" id="PF00271">
    <property type="entry name" value="Helicase_C"/>
    <property type="match status" value="1"/>
</dbReference>
<dbReference type="Pfam" id="PF04851">
    <property type="entry name" value="ResIII"/>
    <property type="match status" value="1"/>
</dbReference>
<dbReference type="Pfam" id="PF02151">
    <property type="entry name" value="UVR"/>
    <property type="match status" value="1"/>
</dbReference>
<dbReference type="Pfam" id="PF12344">
    <property type="entry name" value="UvrB"/>
    <property type="match status" value="1"/>
</dbReference>
<dbReference type="Pfam" id="PF17757">
    <property type="entry name" value="UvrB_inter"/>
    <property type="match status" value="1"/>
</dbReference>
<dbReference type="SMART" id="SM00487">
    <property type="entry name" value="DEXDc"/>
    <property type="match status" value="1"/>
</dbReference>
<dbReference type="SMART" id="SM00490">
    <property type="entry name" value="HELICc"/>
    <property type="match status" value="1"/>
</dbReference>
<dbReference type="SUPFAM" id="SSF46600">
    <property type="entry name" value="C-terminal UvrC-binding domain of UvrB"/>
    <property type="match status" value="1"/>
</dbReference>
<dbReference type="SUPFAM" id="SSF52540">
    <property type="entry name" value="P-loop containing nucleoside triphosphate hydrolases"/>
    <property type="match status" value="2"/>
</dbReference>
<dbReference type="PROSITE" id="PS51192">
    <property type="entry name" value="HELICASE_ATP_BIND_1"/>
    <property type="match status" value="1"/>
</dbReference>
<dbReference type="PROSITE" id="PS51194">
    <property type="entry name" value="HELICASE_CTER"/>
    <property type="match status" value="1"/>
</dbReference>
<dbReference type="PROSITE" id="PS50151">
    <property type="entry name" value="UVR"/>
    <property type="match status" value="1"/>
</dbReference>
<protein>
    <recommendedName>
        <fullName evidence="1">UvrABC system protein B</fullName>
        <shortName evidence="1">Protein UvrB</shortName>
    </recommendedName>
    <alternativeName>
        <fullName evidence="1">Excinuclease ABC subunit B</fullName>
    </alternativeName>
</protein>
<name>UVRB_ENTFA</name>
<evidence type="ECO:0000255" key="1">
    <source>
        <dbReference type="HAMAP-Rule" id="MF_00204"/>
    </source>
</evidence>
<sequence length="665" mass="76101">MIERETSNTFHLASKYEPAGDQPAAIAELVDGVKGGEKAQILLGATGTGKTFTISNVIQEVNKPTLVIAHNKTLAGQLYGEFKEFFPDNAVEYFVSYYDYYQPEAYVPSSDTYIEKDSSINDEIDKLRHSATSSLLERNDVIVVASVSCIFGLGDPREYSQQVVSLRVGMEMDRNELLKSLVDIQFERNDIDFQRGRFRVRGDVVEIFPASRDEHALRVEFFGDEIDRIREVDALTGEIVGETEHVAIFPATHFVTNEEHMEHAISQIQEELEARLKVLRSENKLLEAQRLEQRTNYDIEMMREMGYTSGIENYSRHMDGRQEGEPPYTLLDFFPDDFLLVIDESHVTMPQIRGMYNGDRARKQMLVDYGFRLPSALDNRPLRLEEFEQHVNQIVYVSATPGPYEMEQTETVVQQIIRPTGLLDPEVEIRPIMGQIDDLVGEIHERIEKDQRVFVTTLTKKMAEDLTDYFKELGLKVKYLHSDIKTLERTEIIRDLRLGEFDILIGINLLREGIDVPEVSLIAILDADKEGFLRSERSLVQTMGRAARNAEGKVIMYADKITDSMQRAMDETARRRAIQEAYNEEHGIEPKTIIKEIRDLISISKTADKDETVVQLDKSYKDLSRQEKADLLMKLEREMKDAAKALDFETAATLRDTILELKAAK</sequence>
<keyword id="KW-0067">ATP-binding</keyword>
<keyword id="KW-0963">Cytoplasm</keyword>
<keyword id="KW-0227">DNA damage</keyword>
<keyword id="KW-0228">DNA excision</keyword>
<keyword id="KW-0234">DNA repair</keyword>
<keyword id="KW-0267">Excision nuclease</keyword>
<keyword id="KW-0547">Nucleotide-binding</keyword>
<keyword id="KW-1185">Reference proteome</keyword>
<keyword id="KW-0742">SOS response</keyword>
<reference key="1">
    <citation type="journal article" date="2003" name="Science">
        <title>Role of mobile DNA in the evolution of vancomycin-resistant Enterococcus faecalis.</title>
        <authorList>
            <person name="Paulsen I.T."/>
            <person name="Banerjei L."/>
            <person name="Myers G.S.A."/>
            <person name="Nelson K.E."/>
            <person name="Seshadri R."/>
            <person name="Read T.D."/>
            <person name="Fouts D.E."/>
            <person name="Eisen J.A."/>
            <person name="Gill S.R."/>
            <person name="Heidelberg J.F."/>
            <person name="Tettelin H."/>
            <person name="Dodson R.J."/>
            <person name="Umayam L.A."/>
            <person name="Brinkac L.M."/>
            <person name="Beanan M.J."/>
            <person name="Daugherty S.C."/>
            <person name="DeBoy R.T."/>
            <person name="Durkin S.A."/>
            <person name="Kolonay J.F."/>
            <person name="Madupu R."/>
            <person name="Nelson W.C."/>
            <person name="Vamathevan J.J."/>
            <person name="Tran B."/>
            <person name="Upton J."/>
            <person name="Hansen T."/>
            <person name="Shetty J."/>
            <person name="Khouri H.M."/>
            <person name="Utterback T.R."/>
            <person name="Radune D."/>
            <person name="Ketchum K.A."/>
            <person name="Dougherty B.A."/>
            <person name="Fraser C.M."/>
        </authorList>
    </citation>
    <scope>NUCLEOTIDE SEQUENCE [LARGE SCALE GENOMIC DNA]</scope>
    <source>
        <strain>ATCC 700802 / V583</strain>
    </source>
</reference>
<feature type="chain" id="PRO_0000227312" description="UvrABC system protein B">
    <location>
        <begin position="1"/>
        <end position="665"/>
    </location>
</feature>
<feature type="domain" description="Helicase ATP-binding" evidence="1">
    <location>
        <begin position="31"/>
        <end position="414"/>
    </location>
</feature>
<feature type="domain" description="Helicase C-terminal" evidence="1">
    <location>
        <begin position="435"/>
        <end position="601"/>
    </location>
</feature>
<feature type="domain" description="UVR" evidence="1">
    <location>
        <begin position="629"/>
        <end position="664"/>
    </location>
</feature>
<feature type="short sequence motif" description="Beta-hairpin">
    <location>
        <begin position="97"/>
        <end position="120"/>
    </location>
</feature>
<feature type="binding site" evidence="1">
    <location>
        <begin position="44"/>
        <end position="51"/>
    </location>
    <ligand>
        <name>ATP</name>
        <dbReference type="ChEBI" id="CHEBI:30616"/>
    </ligand>
</feature>
<organism>
    <name type="scientific">Enterococcus faecalis (strain ATCC 700802 / V583)</name>
    <dbReference type="NCBI Taxonomy" id="226185"/>
    <lineage>
        <taxon>Bacteria</taxon>
        <taxon>Bacillati</taxon>
        <taxon>Bacillota</taxon>
        <taxon>Bacilli</taxon>
        <taxon>Lactobacillales</taxon>
        <taxon>Enterococcaceae</taxon>
        <taxon>Enterococcus</taxon>
    </lineage>
</organism>
<comment type="function">
    <text evidence="1">The UvrABC repair system catalyzes the recognition and processing of DNA lesions. A damage recognition complex composed of 2 UvrA and 2 UvrB subunits scans DNA for abnormalities. Upon binding of the UvrA(2)B(2) complex to a putative damaged site, the DNA wraps around one UvrB monomer. DNA wrap is dependent on ATP binding by UvrB and probably causes local melting of the DNA helix, facilitating insertion of UvrB beta-hairpin between the DNA strands. Then UvrB probes one DNA strand for the presence of a lesion. If a lesion is found the UvrA subunits dissociate and the UvrB-DNA preincision complex is formed. This complex is subsequently bound by UvrC and the second UvrB is released. If no lesion is found, the DNA wraps around the other UvrB subunit that will check the other stand for damage.</text>
</comment>
<comment type="subunit">
    <text evidence="1">Forms a heterotetramer with UvrA during the search for lesions. Interacts with UvrC in an incision complex.</text>
</comment>
<comment type="subcellular location">
    <subcellularLocation>
        <location evidence="1">Cytoplasm</location>
    </subcellularLocation>
</comment>
<comment type="domain">
    <text evidence="1">The beta-hairpin motif is involved in DNA binding.</text>
</comment>
<comment type="similarity">
    <text evidence="1">Belongs to the UvrB family.</text>
</comment>